<evidence type="ECO:0000255" key="1">
    <source>
        <dbReference type="HAMAP-Rule" id="MF_01006"/>
    </source>
</evidence>
<organism>
    <name type="scientific">Chlorobium phaeobacteroides (strain DSM 266 / SMG 266 / 2430)</name>
    <dbReference type="NCBI Taxonomy" id="290317"/>
    <lineage>
        <taxon>Bacteria</taxon>
        <taxon>Pseudomonadati</taxon>
        <taxon>Chlorobiota</taxon>
        <taxon>Chlorobiia</taxon>
        <taxon>Chlorobiales</taxon>
        <taxon>Chlorobiaceae</taxon>
        <taxon>Chlorobium/Pelodictyon group</taxon>
        <taxon>Chlorobium</taxon>
    </lineage>
</organism>
<keyword id="KW-0046">Antibiotic resistance</keyword>
<keyword id="KW-0997">Cell inner membrane</keyword>
<keyword id="KW-1003">Cell membrane</keyword>
<keyword id="KW-0133">Cell shape</keyword>
<keyword id="KW-0961">Cell wall biogenesis/degradation</keyword>
<keyword id="KW-0378">Hydrolase</keyword>
<keyword id="KW-0472">Membrane</keyword>
<keyword id="KW-0573">Peptidoglycan synthesis</keyword>
<keyword id="KW-1185">Reference proteome</keyword>
<keyword id="KW-0812">Transmembrane</keyword>
<keyword id="KW-1133">Transmembrane helix</keyword>
<dbReference type="EC" id="3.6.1.27" evidence="1"/>
<dbReference type="EMBL" id="CP000492">
    <property type="protein sequence ID" value="ABL64720.1"/>
    <property type="molecule type" value="Genomic_DNA"/>
</dbReference>
<dbReference type="RefSeq" id="WP_011744550.1">
    <property type="nucleotide sequence ID" value="NC_008639.1"/>
</dbReference>
<dbReference type="SMR" id="A1BE93"/>
<dbReference type="STRING" id="290317.Cpha266_0665"/>
<dbReference type="KEGG" id="cph:Cpha266_0665"/>
<dbReference type="eggNOG" id="COG1968">
    <property type="taxonomic scope" value="Bacteria"/>
</dbReference>
<dbReference type="HOGENOM" id="CLU_060296_1_0_10"/>
<dbReference type="OrthoDB" id="9808289at2"/>
<dbReference type="Proteomes" id="UP000008701">
    <property type="component" value="Chromosome"/>
</dbReference>
<dbReference type="GO" id="GO:0005886">
    <property type="term" value="C:plasma membrane"/>
    <property type="evidence" value="ECO:0007669"/>
    <property type="project" value="UniProtKB-SubCell"/>
</dbReference>
<dbReference type="GO" id="GO:0050380">
    <property type="term" value="F:undecaprenyl-diphosphatase activity"/>
    <property type="evidence" value="ECO:0007669"/>
    <property type="project" value="UniProtKB-UniRule"/>
</dbReference>
<dbReference type="GO" id="GO:0071555">
    <property type="term" value="P:cell wall organization"/>
    <property type="evidence" value="ECO:0007669"/>
    <property type="project" value="UniProtKB-KW"/>
</dbReference>
<dbReference type="GO" id="GO:0009252">
    <property type="term" value="P:peptidoglycan biosynthetic process"/>
    <property type="evidence" value="ECO:0007669"/>
    <property type="project" value="UniProtKB-KW"/>
</dbReference>
<dbReference type="GO" id="GO:0008360">
    <property type="term" value="P:regulation of cell shape"/>
    <property type="evidence" value="ECO:0007669"/>
    <property type="project" value="UniProtKB-KW"/>
</dbReference>
<dbReference type="GO" id="GO:0046677">
    <property type="term" value="P:response to antibiotic"/>
    <property type="evidence" value="ECO:0007669"/>
    <property type="project" value="UniProtKB-UniRule"/>
</dbReference>
<dbReference type="HAMAP" id="MF_01006">
    <property type="entry name" value="Undec_diphosphatase"/>
    <property type="match status" value="1"/>
</dbReference>
<dbReference type="InterPro" id="IPR003824">
    <property type="entry name" value="UppP"/>
</dbReference>
<dbReference type="NCBIfam" id="TIGR00753">
    <property type="entry name" value="undec_PP_bacA"/>
    <property type="match status" value="1"/>
</dbReference>
<dbReference type="PANTHER" id="PTHR30622">
    <property type="entry name" value="UNDECAPRENYL-DIPHOSPHATASE"/>
    <property type="match status" value="1"/>
</dbReference>
<dbReference type="PANTHER" id="PTHR30622:SF4">
    <property type="entry name" value="UNDECAPRENYL-DIPHOSPHATASE"/>
    <property type="match status" value="1"/>
</dbReference>
<dbReference type="Pfam" id="PF02673">
    <property type="entry name" value="BacA"/>
    <property type="match status" value="1"/>
</dbReference>
<gene>
    <name evidence="1" type="primary">uppP</name>
    <name type="ordered locus">Cpha266_0665</name>
</gene>
<proteinExistence type="inferred from homology"/>
<protein>
    <recommendedName>
        <fullName evidence="1">Undecaprenyl-diphosphatase</fullName>
        <ecNumber evidence="1">3.6.1.27</ecNumber>
    </recommendedName>
    <alternativeName>
        <fullName evidence="1">Bacitracin resistance protein</fullName>
    </alternativeName>
    <alternativeName>
        <fullName evidence="1">Undecaprenyl pyrophosphate phosphatase</fullName>
    </alternativeName>
</protein>
<comment type="function">
    <text evidence="1">Catalyzes the dephosphorylation of undecaprenyl diphosphate (UPP). Confers resistance to bacitracin.</text>
</comment>
<comment type="catalytic activity">
    <reaction evidence="1">
        <text>di-trans,octa-cis-undecaprenyl diphosphate + H2O = di-trans,octa-cis-undecaprenyl phosphate + phosphate + H(+)</text>
        <dbReference type="Rhea" id="RHEA:28094"/>
        <dbReference type="ChEBI" id="CHEBI:15377"/>
        <dbReference type="ChEBI" id="CHEBI:15378"/>
        <dbReference type="ChEBI" id="CHEBI:43474"/>
        <dbReference type="ChEBI" id="CHEBI:58405"/>
        <dbReference type="ChEBI" id="CHEBI:60392"/>
        <dbReference type="EC" id="3.6.1.27"/>
    </reaction>
</comment>
<comment type="subcellular location">
    <subcellularLocation>
        <location evidence="1">Cell inner membrane</location>
        <topology evidence="1">Multi-pass membrane protein</topology>
    </subcellularLocation>
</comment>
<comment type="miscellaneous">
    <text>Bacitracin is thought to be involved in the inhibition of peptidoglycan synthesis by sequestering undecaprenyl diphosphate, thereby reducing the pool of lipid carrier available.</text>
</comment>
<comment type="similarity">
    <text evidence="1">Belongs to the UppP family.</text>
</comment>
<feature type="chain" id="PRO_0000290697" description="Undecaprenyl-diphosphatase">
    <location>
        <begin position="1"/>
        <end position="282"/>
    </location>
</feature>
<feature type="transmembrane region" description="Helical" evidence="1">
    <location>
        <begin position="1"/>
        <end position="21"/>
    </location>
</feature>
<feature type="transmembrane region" description="Helical" evidence="1">
    <location>
        <begin position="40"/>
        <end position="60"/>
    </location>
</feature>
<feature type="transmembrane region" description="Helical" evidence="1">
    <location>
        <begin position="85"/>
        <end position="105"/>
    </location>
</feature>
<feature type="transmembrane region" description="Helical" evidence="1">
    <location>
        <begin position="117"/>
        <end position="137"/>
    </location>
</feature>
<feature type="transmembrane region" description="Helical" evidence="1">
    <location>
        <begin position="196"/>
        <end position="216"/>
    </location>
</feature>
<feature type="transmembrane region" description="Helical" evidence="1">
    <location>
        <begin position="229"/>
        <end position="249"/>
    </location>
</feature>
<feature type="transmembrane region" description="Helical" evidence="1">
    <location>
        <begin position="258"/>
        <end position="278"/>
    </location>
</feature>
<accession>A1BE93</accession>
<name>UPPP_CHLPD</name>
<reference key="1">
    <citation type="submission" date="2006-12" db="EMBL/GenBank/DDBJ databases">
        <title>Complete sequence of Chlorobium phaeobacteroides DSM 266.</title>
        <authorList>
            <consortium name="US DOE Joint Genome Institute"/>
            <person name="Copeland A."/>
            <person name="Lucas S."/>
            <person name="Lapidus A."/>
            <person name="Barry K."/>
            <person name="Detter J.C."/>
            <person name="Glavina del Rio T."/>
            <person name="Hammon N."/>
            <person name="Israni S."/>
            <person name="Pitluck S."/>
            <person name="Goltsman E."/>
            <person name="Schmutz J."/>
            <person name="Larimer F."/>
            <person name="Land M."/>
            <person name="Hauser L."/>
            <person name="Mikhailova N."/>
            <person name="Li T."/>
            <person name="Overmann J."/>
            <person name="Bryant D.A."/>
            <person name="Richardson P."/>
        </authorList>
    </citation>
    <scope>NUCLEOTIDE SEQUENCE [LARGE SCALE GENOMIC DNA]</scope>
    <source>
        <strain>DSM 266 / SMG 266 / 2430</strain>
    </source>
</reference>
<sequence>MTLFESIVLGVVQGLTEFLPVSSTAHLRIIPALAGWEDPGAAFTAVVQLGTLAAVLIYFYKDIYAILAAVIQGIMKGRPFDTHEAAMGWMIAVGTLPIVICGLLFKTEIETSLRSLYWVSGALIGFALLLLVAEWSVKKRLKQNMSMTSMDTIGWKEAIFTGFAQCLALIPGASRSGVTITGGLFLNMSRESAARFSFLLSLPSVFAAALFELYHTWDIIASSAGSIAAITAATITAGITGYLSIAFLISYLKKHTTSIFIIYRIILGAGILSLIAAGRLQP</sequence>